<gene>
    <name evidence="1" type="primary">thiI</name>
    <name type="ordered locus">VS_2401</name>
</gene>
<keyword id="KW-0067">ATP-binding</keyword>
<keyword id="KW-0963">Cytoplasm</keyword>
<keyword id="KW-1015">Disulfide bond</keyword>
<keyword id="KW-0547">Nucleotide-binding</keyword>
<keyword id="KW-0676">Redox-active center</keyword>
<keyword id="KW-0694">RNA-binding</keyword>
<keyword id="KW-0784">Thiamine biosynthesis</keyword>
<keyword id="KW-0808">Transferase</keyword>
<keyword id="KW-0820">tRNA-binding</keyword>
<sequence length="482" mass="54816">MKFIVKPHPEIFVKSESVRKRFTKILERNIRTILQRRTESVAVFNRRDHIEVTSESDKYFKETLEVLTQTPGIHHSLEVQQSEFKDLHNIYEQVLERSGALIEGKTFSVRAKRRGKHDFTSIELERYVGGGLNQAVESAKVKLKNPDITVKVEVENDKLNQVIERHKGLGGFPLGTQEDLLSLISGGFDSGVSSYLHIKRGSKVHYCFFNLGGPAHEIGVKQVSHYLWDKYGSSAKVKFISIDFEPVVAEILENVEDGQMGVVLKRMFMRAGGMVAERFGIEALVTGEALGQVSSQTLTNLRHIDNVTDTLILRPLINWDKEDIIDLSRKIGTEDFAKVMPEYCGVISKKPTVKAKKGKLEAEEAKFNFEVLEQVIENARIMDIRDIEKESQEQAPEVEQVQAVAEHAVVLDIRSPDEEDESPLEIDGVEIKHIPFFKLSTQFGDLDQSKEYLLYCDRGVMSRLQALYLQEQGFHNVKVYRP</sequence>
<feature type="chain" id="PRO_1000196939" description="tRNA sulfurtransferase">
    <location>
        <begin position="1"/>
        <end position="482"/>
    </location>
</feature>
<feature type="domain" description="THUMP" evidence="1">
    <location>
        <begin position="61"/>
        <end position="165"/>
    </location>
</feature>
<feature type="domain" description="Rhodanese" evidence="1">
    <location>
        <begin position="404"/>
        <end position="482"/>
    </location>
</feature>
<feature type="active site" description="Cysteine persulfide intermediate" evidence="1">
    <location>
        <position position="456"/>
    </location>
</feature>
<feature type="binding site" evidence="1">
    <location>
        <begin position="183"/>
        <end position="184"/>
    </location>
    <ligand>
        <name>ATP</name>
        <dbReference type="ChEBI" id="CHEBI:30616"/>
    </ligand>
</feature>
<feature type="binding site" evidence="1">
    <location>
        <position position="265"/>
    </location>
    <ligand>
        <name>ATP</name>
        <dbReference type="ChEBI" id="CHEBI:30616"/>
    </ligand>
</feature>
<feature type="binding site" evidence="1">
    <location>
        <position position="287"/>
    </location>
    <ligand>
        <name>ATP</name>
        <dbReference type="ChEBI" id="CHEBI:30616"/>
    </ligand>
</feature>
<feature type="binding site" evidence="1">
    <location>
        <position position="296"/>
    </location>
    <ligand>
        <name>ATP</name>
        <dbReference type="ChEBI" id="CHEBI:30616"/>
    </ligand>
</feature>
<feature type="disulfide bond" description="Redox-active" evidence="1">
    <location>
        <begin position="344"/>
        <end position="456"/>
    </location>
</feature>
<evidence type="ECO:0000255" key="1">
    <source>
        <dbReference type="HAMAP-Rule" id="MF_00021"/>
    </source>
</evidence>
<name>THII_VIBA3</name>
<organism>
    <name type="scientific">Vibrio atlanticus (strain LGP32)</name>
    <name type="common">Vibrio splendidus (strain Mel32)</name>
    <dbReference type="NCBI Taxonomy" id="575788"/>
    <lineage>
        <taxon>Bacteria</taxon>
        <taxon>Pseudomonadati</taxon>
        <taxon>Pseudomonadota</taxon>
        <taxon>Gammaproteobacteria</taxon>
        <taxon>Vibrionales</taxon>
        <taxon>Vibrionaceae</taxon>
        <taxon>Vibrio</taxon>
    </lineage>
</organism>
<reference key="1">
    <citation type="submission" date="2009-02" db="EMBL/GenBank/DDBJ databases">
        <title>Vibrio splendidus str. LGP32 complete genome.</title>
        <authorList>
            <person name="Mazel D."/>
            <person name="Le Roux F."/>
        </authorList>
    </citation>
    <scope>NUCLEOTIDE SEQUENCE [LARGE SCALE GENOMIC DNA]</scope>
    <source>
        <strain>LGP32</strain>
    </source>
</reference>
<protein>
    <recommendedName>
        <fullName evidence="1">tRNA sulfurtransferase</fullName>
        <ecNumber evidence="1">2.8.1.4</ecNumber>
    </recommendedName>
    <alternativeName>
        <fullName evidence="1">Sulfur carrier protein ThiS sulfurtransferase</fullName>
    </alternativeName>
    <alternativeName>
        <fullName evidence="1">Thiamine biosynthesis protein ThiI</fullName>
    </alternativeName>
    <alternativeName>
        <fullName evidence="1">tRNA 4-thiouridine synthase</fullName>
    </alternativeName>
</protein>
<accession>B7VJ96</accession>
<proteinExistence type="inferred from homology"/>
<comment type="function">
    <text evidence="1">Catalyzes the ATP-dependent transfer of a sulfur to tRNA to produce 4-thiouridine in position 8 of tRNAs, which functions as a near-UV photosensor. Also catalyzes the transfer of sulfur to the sulfur carrier protein ThiS, forming ThiS-thiocarboxylate. This is a step in the synthesis of thiazole, in the thiamine biosynthesis pathway. The sulfur is donated as persulfide by IscS.</text>
</comment>
<comment type="catalytic activity">
    <reaction evidence="1">
        <text>[ThiI sulfur-carrier protein]-S-sulfanyl-L-cysteine + a uridine in tRNA + 2 reduced [2Fe-2S]-[ferredoxin] + ATP + H(+) = [ThiI sulfur-carrier protein]-L-cysteine + a 4-thiouridine in tRNA + 2 oxidized [2Fe-2S]-[ferredoxin] + AMP + diphosphate</text>
        <dbReference type="Rhea" id="RHEA:24176"/>
        <dbReference type="Rhea" id="RHEA-COMP:10000"/>
        <dbReference type="Rhea" id="RHEA-COMP:10001"/>
        <dbReference type="Rhea" id="RHEA-COMP:13337"/>
        <dbReference type="Rhea" id="RHEA-COMP:13338"/>
        <dbReference type="Rhea" id="RHEA-COMP:13339"/>
        <dbReference type="Rhea" id="RHEA-COMP:13340"/>
        <dbReference type="ChEBI" id="CHEBI:15378"/>
        <dbReference type="ChEBI" id="CHEBI:29950"/>
        <dbReference type="ChEBI" id="CHEBI:30616"/>
        <dbReference type="ChEBI" id="CHEBI:33019"/>
        <dbReference type="ChEBI" id="CHEBI:33737"/>
        <dbReference type="ChEBI" id="CHEBI:33738"/>
        <dbReference type="ChEBI" id="CHEBI:61963"/>
        <dbReference type="ChEBI" id="CHEBI:65315"/>
        <dbReference type="ChEBI" id="CHEBI:136798"/>
        <dbReference type="ChEBI" id="CHEBI:456215"/>
        <dbReference type="EC" id="2.8.1.4"/>
    </reaction>
</comment>
<comment type="catalytic activity">
    <reaction evidence="1">
        <text>[ThiS sulfur-carrier protein]-C-terminal Gly-Gly-AMP + S-sulfanyl-L-cysteinyl-[cysteine desulfurase] + AH2 = [ThiS sulfur-carrier protein]-C-terminal-Gly-aminoethanethioate + L-cysteinyl-[cysteine desulfurase] + A + AMP + 2 H(+)</text>
        <dbReference type="Rhea" id="RHEA:43340"/>
        <dbReference type="Rhea" id="RHEA-COMP:12157"/>
        <dbReference type="Rhea" id="RHEA-COMP:12158"/>
        <dbReference type="Rhea" id="RHEA-COMP:12910"/>
        <dbReference type="Rhea" id="RHEA-COMP:19908"/>
        <dbReference type="ChEBI" id="CHEBI:13193"/>
        <dbReference type="ChEBI" id="CHEBI:15378"/>
        <dbReference type="ChEBI" id="CHEBI:17499"/>
        <dbReference type="ChEBI" id="CHEBI:29950"/>
        <dbReference type="ChEBI" id="CHEBI:61963"/>
        <dbReference type="ChEBI" id="CHEBI:90618"/>
        <dbReference type="ChEBI" id="CHEBI:232372"/>
        <dbReference type="ChEBI" id="CHEBI:456215"/>
    </reaction>
</comment>
<comment type="pathway">
    <text evidence="1">Cofactor biosynthesis; thiamine diphosphate biosynthesis.</text>
</comment>
<comment type="subcellular location">
    <subcellularLocation>
        <location evidence="1">Cytoplasm</location>
    </subcellularLocation>
</comment>
<comment type="similarity">
    <text evidence="1">Belongs to the ThiI family.</text>
</comment>
<dbReference type="EC" id="2.8.1.4" evidence="1"/>
<dbReference type="EMBL" id="FM954972">
    <property type="protein sequence ID" value="CAV19560.1"/>
    <property type="molecule type" value="Genomic_DNA"/>
</dbReference>
<dbReference type="SMR" id="B7VJ96"/>
<dbReference type="STRING" id="575788.VS_2401"/>
<dbReference type="KEGG" id="vsp:VS_2401"/>
<dbReference type="eggNOG" id="COG0301">
    <property type="taxonomic scope" value="Bacteria"/>
</dbReference>
<dbReference type="eggNOG" id="COG0607">
    <property type="taxonomic scope" value="Bacteria"/>
</dbReference>
<dbReference type="HOGENOM" id="CLU_037952_4_1_6"/>
<dbReference type="UniPathway" id="UPA00060"/>
<dbReference type="Proteomes" id="UP000009100">
    <property type="component" value="Chromosome 1"/>
</dbReference>
<dbReference type="GO" id="GO:0005829">
    <property type="term" value="C:cytosol"/>
    <property type="evidence" value="ECO:0007669"/>
    <property type="project" value="TreeGrafter"/>
</dbReference>
<dbReference type="GO" id="GO:0005524">
    <property type="term" value="F:ATP binding"/>
    <property type="evidence" value="ECO:0007669"/>
    <property type="project" value="UniProtKB-UniRule"/>
</dbReference>
<dbReference type="GO" id="GO:0004810">
    <property type="term" value="F:CCA tRNA nucleotidyltransferase activity"/>
    <property type="evidence" value="ECO:0007669"/>
    <property type="project" value="InterPro"/>
</dbReference>
<dbReference type="GO" id="GO:0000049">
    <property type="term" value="F:tRNA binding"/>
    <property type="evidence" value="ECO:0007669"/>
    <property type="project" value="UniProtKB-UniRule"/>
</dbReference>
<dbReference type="GO" id="GO:0140741">
    <property type="term" value="F:tRNA-uracil-4 sulfurtransferase activity"/>
    <property type="evidence" value="ECO:0007669"/>
    <property type="project" value="UniProtKB-EC"/>
</dbReference>
<dbReference type="GO" id="GO:0009228">
    <property type="term" value="P:thiamine biosynthetic process"/>
    <property type="evidence" value="ECO:0007669"/>
    <property type="project" value="UniProtKB-KW"/>
</dbReference>
<dbReference type="GO" id="GO:0009229">
    <property type="term" value="P:thiamine diphosphate biosynthetic process"/>
    <property type="evidence" value="ECO:0007669"/>
    <property type="project" value="UniProtKB-UniRule"/>
</dbReference>
<dbReference type="GO" id="GO:0052837">
    <property type="term" value="P:thiazole biosynthetic process"/>
    <property type="evidence" value="ECO:0007669"/>
    <property type="project" value="InterPro"/>
</dbReference>
<dbReference type="GO" id="GO:0002937">
    <property type="term" value="P:tRNA 4-thiouridine biosynthesis"/>
    <property type="evidence" value="ECO:0007669"/>
    <property type="project" value="TreeGrafter"/>
</dbReference>
<dbReference type="CDD" id="cd01712">
    <property type="entry name" value="PPase_ThiI"/>
    <property type="match status" value="1"/>
</dbReference>
<dbReference type="CDD" id="cd00158">
    <property type="entry name" value="RHOD"/>
    <property type="match status" value="1"/>
</dbReference>
<dbReference type="CDD" id="cd11716">
    <property type="entry name" value="THUMP_ThiI"/>
    <property type="match status" value="1"/>
</dbReference>
<dbReference type="FunFam" id="3.40.250.10:FF:000003">
    <property type="entry name" value="tRNA sulfurtransferase"/>
    <property type="match status" value="1"/>
</dbReference>
<dbReference type="FunFam" id="3.40.50.620:FF:000029">
    <property type="entry name" value="tRNA sulfurtransferase"/>
    <property type="match status" value="1"/>
</dbReference>
<dbReference type="Gene3D" id="3.30.2130.30">
    <property type="match status" value="1"/>
</dbReference>
<dbReference type="Gene3D" id="3.40.50.620">
    <property type="entry name" value="HUPs"/>
    <property type="match status" value="1"/>
</dbReference>
<dbReference type="Gene3D" id="3.40.250.10">
    <property type="entry name" value="Rhodanese-like domain"/>
    <property type="match status" value="1"/>
</dbReference>
<dbReference type="HAMAP" id="MF_00021">
    <property type="entry name" value="ThiI"/>
    <property type="match status" value="1"/>
</dbReference>
<dbReference type="InterPro" id="IPR001763">
    <property type="entry name" value="Rhodanese-like_dom"/>
</dbReference>
<dbReference type="InterPro" id="IPR036873">
    <property type="entry name" value="Rhodanese-like_dom_sf"/>
</dbReference>
<dbReference type="InterPro" id="IPR014729">
    <property type="entry name" value="Rossmann-like_a/b/a_fold"/>
</dbReference>
<dbReference type="InterPro" id="IPR020536">
    <property type="entry name" value="ThiI_AANH"/>
</dbReference>
<dbReference type="InterPro" id="IPR054173">
    <property type="entry name" value="ThiI_fer"/>
</dbReference>
<dbReference type="InterPro" id="IPR049961">
    <property type="entry name" value="ThiI_N"/>
</dbReference>
<dbReference type="InterPro" id="IPR026340">
    <property type="entry name" value="THII_Thiazole_biosynth_dom"/>
</dbReference>
<dbReference type="InterPro" id="IPR004114">
    <property type="entry name" value="THUMP_dom"/>
</dbReference>
<dbReference type="InterPro" id="IPR049962">
    <property type="entry name" value="THUMP_ThiI"/>
</dbReference>
<dbReference type="InterPro" id="IPR003720">
    <property type="entry name" value="tRNA_STrfase"/>
</dbReference>
<dbReference type="InterPro" id="IPR050102">
    <property type="entry name" value="tRNA_sulfurtransferase_ThiI"/>
</dbReference>
<dbReference type="NCBIfam" id="TIGR04271">
    <property type="entry name" value="ThiI_C_thiazole"/>
    <property type="match status" value="1"/>
</dbReference>
<dbReference type="NCBIfam" id="TIGR00342">
    <property type="entry name" value="tRNA uracil 4-sulfurtransferase ThiI"/>
    <property type="match status" value="1"/>
</dbReference>
<dbReference type="PANTHER" id="PTHR43209">
    <property type="entry name" value="TRNA SULFURTRANSFERASE"/>
    <property type="match status" value="1"/>
</dbReference>
<dbReference type="PANTHER" id="PTHR43209:SF1">
    <property type="entry name" value="TRNA SULFURTRANSFERASE"/>
    <property type="match status" value="1"/>
</dbReference>
<dbReference type="Pfam" id="PF00581">
    <property type="entry name" value="Rhodanese"/>
    <property type="match status" value="1"/>
</dbReference>
<dbReference type="Pfam" id="PF02568">
    <property type="entry name" value="ThiI"/>
    <property type="match status" value="1"/>
</dbReference>
<dbReference type="Pfam" id="PF22025">
    <property type="entry name" value="ThiI_fer"/>
    <property type="match status" value="1"/>
</dbReference>
<dbReference type="Pfam" id="PF02926">
    <property type="entry name" value="THUMP"/>
    <property type="match status" value="1"/>
</dbReference>
<dbReference type="SMART" id="SM00981">
    <property type="entry name" value="THUMP"/>
    <property type="match status" value="1"/>
</dbReference>
<dbReference type="SUPFAM" id="SSF52402">
    <property type="entry name" value="Adenine nucleotide alpha hydrolases-like"/>
    <property type="match status" value="1"/>
</dbReference>
<dbReference type="SUPFAM" id="SSF52821">
    <property type="entry name" value="Rhodanese/Cell cycle control phosphatase"/>
    <property type="match status" value="1"/>
</dbReference>
<dbReference type="SUPFAM" id="SSF143437">
    <property type="entry name" value="THUMP domain-like"/>
    <property type="match status" value="1"/>
</dbReference>
<dbReference type="PROSITE" id="PS50206">
    <property type="entry name" value="RHODANESE_3"/>
    <property type="match status" value="1"/>
</dbReference>
<dbReference type="PROSITE" id="PS51165">
    <property type="entry name" value="THUMP"/>
    <property type="match status" value="1"/>
</dbReference>